<protein>
    <recommendedName>
        <fullName>E3 SUMO-protein ligase PIAS3</fullName>
        <ecNumber>2.3.2.-</ecNumber>
    </recommendedName>
    <alternativeName>
        <fullName evidence="21">E3 SUMO-protein transferase PIAS3</fullName>
    </alternativeName>
    <alternativeName>
        <fullName>Protein inhibitor of activated STAT protein 3</fullName>
    </alternativeName>
</protein>
<proteinExistence type="evidence at protein level"/>
<gene>
    <name type="primary">Pias3</name>
</gene>
<accession>O54714</accession>
<accession>Q80WF8</accession>
<accession>Q8R598</accession>
<dbReference type="EC" id="2.3.2.-"/>
<dbReference type="EMBL" id="AK040619">
    <property type="protein sequence ID" value="BAC30647.1"/>
    <property type="molecule type" value="mRNA"/>
</dbReference>
<dbReference type="EMBL" id="AK077551">
    <property type="protein sequence ID" value="BAC36858.1"/>
    <property type="molecule type" value="mRNA"/>
</dbReference>
<dbReference type="EMBL" id="BC023128">
    <property type="protein sequence ID" value="AAH23128.1"/>
    <property type="molecule type" value="mRNA"/>
</dbReference>
<dbReference type="EMBL" id="BC051252">
    <property type="protein sequence ID" value="AAH51252.1"/>
    <property type="molecule type" value="mRNA"/>
</dbReference>
<dbReference type="EMBL" id="AF034080">
    <property type="protein sequence ID" value="AAB88902.3"/>
    <property type="molecule type" value="mRNA"/>
</dbReference>
<dbReference type="CCDS" id="CCDS17645.2">
    <molecule id="O54714-3"/>
</dbReference>
<dbReference type="CCDS" id="CCDS38559.1">
    <molecule id="O54714-2"/>
</dbReference>
<dbReference type="CCDS" id="CCDS51007.1">
    <molecule id="O54714-1"/>
</dbReference>
<dbReference type="RefSeq" id="NP_001159421.1">
    <molecule id="O54714-1"/>
    <property type="nucleotide sequence ID" value="NM_001165949.1"/>
</dbReference>
<dbReference type="RefSeq" id="NP_061282.2">
    <molecule id="O54714-3"/>
    <property type="nucleotide sequence ID" value="NM_018812.2"/>
</dbReference>
<dbReference type="RefSeq" id="NP_666247.1">
    <molecule id="O54714-2"/>
    <property type="nucleotide sequence ID" value="NM_146135.2"/>
</dbReference>
<dbReference type="RefSeq" id="XP_006501456.1">
    <molecule id="O54714-2"/>
    <property type="nucleotide sequence ID" value="XM_006501393.2"/>
</dbReference>
<dbReference type="SMR" id="O54714"/>
<dbReference type="BioGRID" id="230874">
    <property type="interactions" value="21"/>
</dbReference>
<dbReference type="CORUM" id="O54714"/>
<dbReference type="FunCoup" id="O54714">
    <property type="interactions" value="3553"/>
</dbReference>
<dbReference type="IntAct" id="O54714">
    <property type="interactions" value="2"/>
</dbReference>
<dbReference type="STRING" id="10090.ENSMUSP00000069259"/>
<dbReference type="GlyGen" id="O54714">
    <property type="glycosylation" value="4 sites, 1 O-linked glycan (4 sites)"/>
</dbReference>
<dbReference type="PhosphoSitePlus" id="O54714"/>
<dbReference type="jPOST" id="O54714"/>
<dbReference type="PaxDb" id="10090-ENSMUSP00000069259"/>
<dbReference type="ProteomicsDB" id="288148">
    <molecule id="O54714-1"/>
</dbReference>
<dbReference type="ProteomicsDB" id="288149">
    <molecule id="O54714-2"/>
</dbReference>
<dbReference type="ProteomicsDB" id="288150">
    <molecule id="O54714-3"/>
</dbReference>
<dbReference type="Antibodypedia" id="20233">
    <property type="antibodies" value="256 antibodies from 39 providers"/>
</dbReference>
<dbReference type="DNASU" id="229615"/>
<dbReference type="Ensembl" id="ENSMUST00000064900.16">
    <molecule id="O54714-1"/>
    <property type="protein sequence ID" value="ENSMUSP00000069259.10"/>
    <property type="gene ID" value="ENSMUSG00000028101.19"/>
</dbReference>
<dbReference type="Ensembl" id="ENSMUST00000107076.10">
    <molecule id="O54714-2"/>
    <property type="protein sequence ID" value="ENSMUSP00000102691.4"/>
    <property type="gene ID" value="ENSMUSG00000028101.19"/>
</dbReference>
<dbReference type="Ensembl" id="ENSMUST00000107077.4">
    <molecule id="O54714-3"/>
    <property type="protein sequence ID" value="ENSMUSP00000102692.4"/>
    <property type="gene ID" value="ENSMUSG00000028101.19"/>
</dbReference>
<dbReference type="GeneID" id="229615"/>
<dbReference type="KEGG" id="mmu:229615"/>
<dbReference type="UCSC" id="uc008qnt.2">
    <molecule id="O54714-1"/>
    <property type="organism name" value="mouse"/>
</dbReference>
<dbReference type="UCSC" id="uc008qnu.2">
    <molecule id="O54714-3"/>
    <property type="organism name" value="mouse"/>
</dbReference>
<dbReference type="AGR" id="MGI:1913126"/>
<dbReference type="CTD" id="10401"/>
<dbReference type="MGI" id="MGI:1913126">
    <property type="gene designation" value="Pias3"/>
</dbReference>
<dbReference type="VEuPathDB" id="HostDB:ENSMUSG00000028101"/>
<dbReference type="eggNOG" id="KOG2169">
    <property type="taxonomic scope" value="Eukaryota"/>
</dbReference>
<dbReference type="GeneTree" id="ENSGT01030000234539"/>
<dbReference type="HOGENOM" id="CLU_020768_1_0_1"/>
<dbReference type="InParanoid" id="O54714"/>
<dbReference type="OMA" id="ENTFMFH"/>
<dbReference type="OrthoDB" id="10263264at2759"/>
<dbReference type="PhylomeDB" id="O54714"/>
<dbReference type="TreeFam" id="TF323787"/>
<dbReference type="Reactome" id="R-MMU-3232118">
    <property type="pathway name" value="SUMOylation of transcription factors"/>
</dbReference>
<dbReference type="Reactome" id="R-MMU-3899300">
    <property type="pathway name" value="SUMOylation of transcription cofactors"/>
</dbReference>
<dbReference type="Reactome" id="R-MMU-4090294">
    <property type="pathway name" value="SUMOylation of intracellular receptors"/>
</dbReference>
<dbReference type="Reactome" id="R-MMU-4615885">
    <property type="pathway name" value="SUMOylation of DNA replication proteins"/>
</dbReference>
<dbReference type="Reactome" id="R-MMU-4755510">
    <property type="pathway name" value="SUMOylation of immune response proteins"/>
</dbReference>
<dbReference type="Reactome" id="R-MMU-5696395">
    <property type="pathway name" value="Formation of Incision Complex in GG-NER"/>
</dbReference>
<dbReference type="UniPathway" id="UPA00886"/>
<dbReference type="BioGRID-ORCS" id="229615">
    <property type="hits" value="1 hit in 80 CRISPR screens"/>
</dbReference>
<dbReference type="ChiTaRS" id="Pias3">
    <property type="organism name" value="mouse"/>
</dbReference>
<dbReference type="PRO" id="PR:O54714"/>
<dbReference type="Proteomes" id="UP000000589">
    <property type="component" value="Chromosome 3"/>
</dbReference>
<dbReference type="RNAct" id="O54714">
    <property type="molecule type" value="protein"/>
</dbReference>
<dbReference type="Bgee" id="ENSMUSG00000028101">
    <property type="expression patterns" value="Expressed in retinal neural layer and 264 other cell types or tissues"/>
</dbReference>
<dbReference type="ExpressionAtlas" id="O54714">
    <property type="expression patterns" value="baseline and differential"/>
</dbReference>
<dbReference type="GO" id="GO:0005737">
    <property type="term" value="C:cytoplasm"/>
    <property type="evidence" value="ECO:0000314"/>
    <property type="project" value="UniProtKB"/>
</dbReference>
<dbReference type="GO" id="GO:0098978">
    <property type="term" value="C:glutamatergic synapse"/>
    <property type="evidence" value="ECO:0000314"/>
    <property type="project" value="SynGO"/>
</dbReference>
<dbReference type="GO" id="GO:0016607">
    <property type="term" value="C:nuclear speck"/>
    <property type="evidence" value="ECO:0007669"/>
    <property type="project" value="UniProtKB-SubCell"/>
</dbReference>
<dbReference type="GO" id="GO:0005634">
    <property type="term" value="C:nucleus"/>
    <property type="evidence" value="ECO:0000314"/>
    <property type="project" value="UniProtKB"/>
</dbReference>
<dbReference type="GO" id="GO:0099524">
    <property type="term" value="C:postsynaptic cytosol"/>
    <property type="evidence" value="ECO:0000314"/>
    <property type="project" value="SynGO"/>
</dbReference>
<dbReference type="GO" id="GO:0099523">
    <property type="term" value="C:presynaptic cytosol"/>
    <property type="evidence" value="ECO:0000314"/>
    <property type="project" value="SynGO"/>
</dbReference>
<dbReference type="GO" id="GO:0019789">
    <property type="term" value="F:SUMO transferase activity"/>
    <property type="evidence" value="ECO:0000314"/>
    <property type="project" value="MGI"/>
</dbReference>
<dbReference type="GO" id="GO:0008270">
    <property type="term" value="F:zinc ion binding"/>
    <property type="evidence" value="ECO:0007669"/>
    <property type="project" value="UniProtKB-KW"/>
</dbReference>
<dbReference type="GO" id="GO:0045892">
    <property type="term" value="P:negative regulation of DNA-templated transcription"/>
    <property type="evidence" value="ECO:0000314"/>
    <property type="project" value="MGI"/>
</dbReference>
<dbReference type="GO" id="GO:0010629">
    <property type="term" value="P:negative regulation of gene expression"/>
    <property type="evidence" value="ECO:0000314"/>
    <property type="project" value="MGI"/>
</dbReference>
<dbReference type="GO" id="GO:0045671">
    <property type="term" value="P:negative regulation of osteoclast differentiation"/>
    <property type="evidence" value="ECO:0000314"/>
    <property type="project" value="MGI"/>
</dbReference>
<dbReference type="GO" id="GO:0033234">
    <property type="term" value="P:negative regulation of protein sumoylation"/>
    <property type="evidence" value="ECO:0000250"/>
    <property type="project" value="UniProtKB"/>
</dbReference>
<dbReference type="GO" id="GO:0000122">
    <property type="term" value="P:negative regulation of transcription by RNA polymerase II"/>
    <property type="evidence" value="ECO:0000314"/>
    <property type="project" value="MGI"/>
</dbReference>
<dbReference type="GO" id="GO:0033235">
    <property type="term" value="P:positive regulation of protein sumoylation"/>
    <property type="evidence" value="ECO:0000250"/>
    <property type="project" value="UniProtKB"/>
</dbReference>
<dbReference type="GO" id="GO:0016925">
    <property type="term" value="P:protein sumoylation"/>
    <property type="evidence" value="ECO:0000314"/>
    <property type="project" value="MGI"/>
</dbReference>
<dbReference type="GO" id="GO:0010803">
    <property type="term" value="P:regulation of tumor necrosis factor-mediated signaling pathway"/>
    <property type="evidence" value="ECO:0000314"/>
    <property type="project" value="MGI"/>
</dbReference>
<dbReference type="CDD" id="cd16820">
    <property type="entry name" value="SP-RING_PIAS3"/>
    <property type="match status" value="1"/>
</dbReference>
<dbReference type="FunFam" id="1.10.720.30:FF:000001">
    <property type="entry name" value="E3 SUMO-protein ligase PIAS2 isoform 1"/>
    <property type="match status" value="1"/>
</dbReference>
<dbReference type="FunFam" id="2.60.120.780:FF:000001">
    <property type="entry name" value="E3 SUMO-protein ligase PIAS2 isoform X1"/>
    <property type="match status" value="1"/>
</dbReference>
<dbReference type="FunFam" id="3.30.40.10:FF:000003">
    <property type="entry name" value="E3 SUMO-protein ligase PIAS2 isoform X1"/>
    <property type="match status" value="1"/>
</dbReference>
<dbReference type="Gene3D" id="2.60.120.780">
    <property type="entry name" value="PINIT domain"/>
    <property type="match status" value="1"/>
</dbReference>
<dbReference type="Gene3D" id="1.10.720.30">
    <property type="entry name" value="SAP domain"/>
    <property type="match status" value="1"/>
</dbReference>
<dbReference type="Gene3D" id="3.30.40.10">
    <property type="entry name" value="Zinc/RING finger domain, C3HC4 (zinc finger)"/>
    <property type="match status" value="1"/>
</dbReference>
<dbReference type="InterPro" id="IPR023321">
    <property type="entry name" value="PINIT"/>
</dbReference>
<dbReference type="InterPro" id="IPR038654">
    <property type="entry name" value="PINIT_sf"/>
</dbReference>
<dbReference type="InterPro" id="IPR003034">
    <property type="entry name" value="SAP_dom"/>
</dbReference>
<dbReference type="InterPro" id="IPR036361">
    <property type="entry name" value="SAP_dom_sf"/>
</dbReference>
<dbReference type="InterPro" id="IPR004181">
    <property type="entry name" value="Znf_MIZ"/>
</dbReference>
<dbReference type="InterPro" id="IPR013083">
    <property type="entry name" value="Znf_RING/FYVE/PHD"/>
</dbReference>
<dbReference type="PANTHER" id="PTHR10782:SF10">
    <property type="entry name" value="E3 SUMO-PROTEIN LIGASE PIAS3"/>
    <property type="match status" value="1"/>
</dbReference>
<dbReference type="PANTHER" id="PTHR10782">
    <property type="entry name" value="ZINC FINGER MIZ DOMAIN-CONTAINING PROTEIN"/>
    <property type="match status" value="1"/>
</dbReference>
<dbReference type="Pfam" id="PF14324">
    <property type="entry name" value="PINIT"/>
    <property type="match status" value="1"/>
</dbReference>
<dbReference type="Pfam" id="PF02037">
    <property type="entry name" value="SAP"/>
    <property type="match status" value="1"/>
</dbReference>
<dbReference type="Pfam" id="PF02891">
    <property type="entry name" value="zf-MIZ"/>
    <property type="match status" value="1"/>
</dbReference>
<dbReference type="SMART" id="SM00513">
    <property type="entry name" value="SAP"/>
    <property type="match status" value="1"/>
</dbReference>
<dbReference type="SUPFAM" id="SSF68906">
    <property type="entry name" value="SAP domain"/>
    <property type="match status" value="1"/>
</dbReference>
<dbReference type="PROSITE" id="PS51466">
    <property type="entry name" value="PINIT"/>
    <property type="match status" value="1"/>
</dbReference>
<dbReference type="PROSITE" id="PS50800">
    <property type="entry name" value="SAP"/>
    <property type="match status" value="1"/>
</dbReference>
<dbReference type="PROSITE" id="PS51044">
    <property type="entry name" value="ZF_SP_RING"/>
    <property type="match status" value="1"/>
</dbReference>
<feature type="chain" id="PRO_0000218980" description="E3 SUMO-protein ligase PIAS3">
    <location>
        <begin position="1"/>
        <end position="628"/>
    </location>
</feature>
<feature type="domain" description="SAP" evidence="3">
    <location>
        <begin position="11"/>
        <end position="45"/>
    </location>
</feature>
<feature type="domain" description="PINIT" evidence="5">
    <location>
        <begin position="115"/>
        <end position="280"/>
    </location>
</feature>
<feature type="zinc finger region" description="SP-RING-type" evidence="4">
    <location>
        <begin position="312"/>
        <end position="393"/>
    </location>
</feature>
<feature type="region of interest" description="Interaction with CCAR2" evidence="2">
    <location>
        <begin position="1"/>
        <end position="200"/>
    </location>
</feature>
<feature type="region of interest" description="SUMO1-binding" evidence="1">
    <location>
        <begin position="450"/>
        <end position="460"/>
    </location>
</feature>
<feature type="region of interest" description="Disordered" evidence="6">
    <location>
        <begin position="571"/>
        <end position="628"/>
    </location>
</feature>
<feature type="short sequence motif" description="LXXLL motif">
    <location>
        <begin position="19"/>
        <end position="23"/>
    </location>
</feature>
<feature type="binding site" evidence="4">
    <location>
        <position position="343"/>
    </location>
    <ligand>
        <name>Zn(2+)</name>
        <dbReference type="ChEBI" id="CHEBI:29105"/>
    </ligand>
</feature>
<feature type="binding site" evidence="4">
    <location>
        <position position="345"/>
    </location>
    <ligand>
        <name>Zn(2+)</name>
        <dbReference type="ChEBI" id="CHEBI:29105"/>
    </ligand>
</feature>
<feature type="binding site" evidence="4">
    <location>
        <position position="366"/>
    </location>
    <ligand>
        <name>Zn(2+)</name>
        <dbReference type="ChEBI" id="CHEBI:29105"/>
    </ligand>
</feature>
<feature type="binding site" evidence="4">
    <location>
        <position position="369"/>
    </location>
    <ligand>
        <name>Zn(2+)</name>
        <dbReference type="ChEBI" id="CHEBI:29105"/>
    </ligand>
</feature>
<feature type="cross-link" description="Glycyl lysine isopeptide (Lys-Gly) (interchain with G-Cter in SUMO2)" evidence="2">
    <location>
        <position position="46"/>
    </location>
</feature>
<feature type="cross-link" description="Glycyl lysine isopeptide (Lys-Gly) (interchain with G-Cter in SUMO2)" evidence="2">
    <location>
        <position position="56"/>
    </location>
</feature>
<feature type="cross-link" description="Glycyl lysine isopeptide (Lys-Gly) (interchain with G-Cter in SUMO2)" evidence="2">
    <location>
        <position position="230"/>
    </location>
</feature>
<feature type="cross-link" description="Glycyl lysine isopeptide (Lys-Gly) (interchain with G-Cter in SUMO2)" evidence="2">
    <location>
        <position position="307"/>
    </location>
</feature>
<feature type="cross-link" description="Glycyl lysine isopeptide (Lys-Gly) (interchain with G-Cter in SUMO2)" evidence="2">
    <location>
        <position position="466"/>
    </location>
</feature>
<feature type="cross-link" description="Glycyl lysine isopeptide (Lys-Gly) (interchain with G-Cter in SUMO2)" evidence="2">
    <location>
        <position position="482"/>
    </location>
</feature>
<feature type="splice variant" id="VSP_012203" description="In isoform 2." evidence="18 19">
    <location>
        <begin position="1"/>
        <end position="9"/>
    </location>
</feature>
<feature type="splice variant" id="VSP_012204" description="In isoform 3." evidence="20">
    <location>
        <begin position="87"/>
        <end position="121"/>
    </location>
</feature>
<feature type="mutagenesis site" description="Nuclear and cytoplasmic location." evidence="15">
    <original>LQVLL</original>
    <variation>AQVAA</variation>
    <location>
        <begin position="19"/>
        <end position="23"/>
    </location>
</feature>
<feature type="mutagenesis site" description="Greatly reduced interaction with STAT3.">
    <original>L</original>
    <variation>A</variation>
    <location>
        <position position="141"/>
    </location>
</feature>
<feature type="mutagenesis site" description="Abolishes interaction with STAT3.">
    <original>R</original>
    <variation>N</variation>
    <location>
        <position position="143"/>
    </location>
</feature>
<feature type="mutagenesis site" description="Abolishes interaction with STAT3.">
    <original>R</original>
    <variation>Q</variation>
    <location>
        <position position="143"/>
    </location>
</feature>
<feature type="mutagenesis site" description="Nuclear and cytoplasmic location." evidence="15">
    <original>INI</original>
    <variation>SDS</variation>
    <location>
        <begin position="242"/>
        <end position="244"/>
    </location>
</feature>
<feature type="mutagenesis site" description="Nuclear and cytoplasmic location." evidence="15">
    <original>CAHLQS</original>
    <variation>GADLQG</variation>
    <location>
        <begin position="343"/>
        <end position="348"/>
    </location>
</feature>
<feature type="mutagenesis site" description="Loss of promotion of IRF1 sumoylation, as well as of autosumoylation; partial loss of suppression of IRF1 transcriptional activity." evidence="14">
    <original>C</original>
    <variation>S</variation>
    <location>
        <position position="343"/>
    </location>
</feature>
<reference key="1">
    <citation type="journal article" date="2005" name="Science">
        <title>The transcriptional landscape of the mammalian genome.</title>
        <authorList>
            <person name="Carninci P."/>
            <person name="Kasukawa T."/>
            <person name="Katayama S."/>
            <person name="Gough J."/>
            <person name="Frith M.C."/>
            <person name="Maeda N."/>
            <person name="Oyama R."/>
            <person name="Ravasi T."/>
            <person name="Lenhard B."/>
            <person name="Wells C."/>
            <person name="Kodzius R."/>
            <person name="Shimokawa K."/>
            <person name="Bajic V.B."/>
            <person name="Brenner S.E."/>
            <person name="Batalov S."/>
            <person name="Forrest A.R."/>
            <person name="Zavolan M."/>
            <person name="Davis M.J."/>
            <person name="Wilming L.G."/>
            <person name="Aidinis V."/>
            <person name="Allen J.E."/>
            <person name="Ambesi-Impiombato A."/>
            <person name="Apweiler R."/>
            <person name="Aturaliya R.N."/>
            <person name="Bailey T.L."/>
            <person name="Bansal M."/>
            <person name="Baxter L."/>
            <person name="Beisel K.W."/>
            <person name="Bersano T."/>
            <person name="Bono H."/>
            <person name="Chalk A.M."/>
            <person name="Chiu K.P."/>
            <person name="Choudhary V."/>
            <person name="Christoffels A."/>
            <person name="Clutterbuck D.R."/>
            <person name="Crowe M.L."/>
            <person name="Dalla E."/>
            <person name="Dalrymple B.P."/>
            <person name="de Bono B."/>
            <person name="Della Gatta G."/>
            <person name="di Bernardo D."/>
            <person name="Down T."/>
            <person name="Engstrom P."/>
            <person name="Fagiolini M."/>
            <person name="Faulkner G."/>
            <person name="Fletcher C.F."/>
            <person name="Fukushima T."/>
            <person name="Furuno M."/>
            <person name="Futaki S."/>
            <person name="Gariboldi M."/>
            <person name="Georgii-Hemming P."/>
            <person name="Gingeras T.R."/>
            <person name="Gojobori T."/>
            <person name="Green R.E."/>
            <person name="Gustincich S."/>
            <person name="Harbers M."/>
            <person name="Hayashi Y."/>
            <person name="Hensch T.K."/>
            <person name="Hirokawa N."/>
            <person name="Hill D."/>
            <person name="Huminiecki L."/>
            <person name="Iacono M."/>
            <person name="Ikeo K."/>
            <person name="Iwama A."/>
            <person name="Ishikawa T."/>
            <person name="Jakt M."/>
            <person name="Kanapin A."/>
            <person name="Katoh M."/>
            <person name="Kawasawa Y."/>
            <person name="Kelso J."/>
            <person name="Kitamura H."/>
            <person name="Kitano H."/>
            <person name="Kollias G."/>
            <person name="Krishnan S.P."/>
            <person name="Kruger A."/>
            <person name="Kummerfeld S.K."/>
            <person name="Kurochkin I.V."/>
            <person name="Lareau L.F."/>
            <person name="Lazarevic D."/>
            <person name="Lipovich L."/>
            <person name="Liu J."/>
            <person name="Liuni S."/>
            <person name="McWilliam S."/>
            <person name="Madan Babu M."/>
            <person name="Madera M."/>
            <person name="Marchionni L."/>
            <person name="Matsuda H."/>
            <person name="Matsuzawa S."/>
            <person name="Miki H."/>
            <person name="Mignone F."/>
            <person name="Miyake S."/>
            <person name="Morris K."/>
            <person name="Mottagui-Tabar S."/>
            <person name="Mulder N."/>
            <person name="Nakano N."/>
            <person name="Nakauchi H."/>
            <person name="Ng P."/>
            <person name="Nilsson R."/>
            <person name="Nishiguchi S."/>
            <person name="Nishikawa S."/>
            <person name="Nori F."/>
            <person name="Ohara O."/>
            <person name="Okazaki Y."/>
            <person name="Orlando V."/>
            <person name="Pang K.C."/>
            <person name="Pavan W.J."/>
            <person name="Pavesi G."/>
            <person name="Pesole G."/>
            <person name="Petrovsky N."/>
            <person name="Piazza S."/>
            <person name="Reed J."/>
            <person name="Reid J.F."/>
            <person name="Ring B.Z."/>
            <person name="Ringwald M."/>
            <person name="Rost B."/>
            <person name="Ruan Y."/>
            <person name="Salzberg S.L."/>
            <person name="Sandelin A."/>
            <person name="Schneider C."/>
            <person name="Schoenbach C."/>
            <person name="Sekiguchi K."/>
            <person name="Semple C.A."/>
            <person name="Seno S."/>
            <person name="Sessa L."/>
            <person name="Sheng Y."/>
            <person name="Shibata Y."/>
            <person name="Shimada H."/>
            <person name="Shimada K."/>
            <person name="Silva D."/>
            <person name="Sinclair B."/>
            <person name="Sperling S."/>
            <person name="Stupka E."/>
            <person name="Sugiura K."/>
            <person name="Sultana R."/>
            <person name="Takenaka Y."/>
            <person name="Taki K."/>
            <person name="Tammoja K."/>
            <person name="Tan S.L."/>
            <person name="Tang S."/>
            <person name="Taylor M.S."/>
            <person name="Tegner J."/>
            <person name="Teichmann S.A."/>
            <person name="Ueda H.R."/>
            <person name="van Nimwegen E."/>
            <person name="Verardo R."/>
            <person name="Wei C.L."/>
            <person name="Yagi K."/>
            <person name="Yamanishi H."/>
            <person name="Zabarovsky E."/>
            <person name="Zhu S."/>
            <person name="Zimmer A."/>
            <person name="Hide W."/>
            <person name="Bult C."/>
            <person name="Grimmond S.M."/>
            <person name="Teasdale R.D."/>
            <person name="Liu E.T."/>
            <person name="Brusic V."/>
            <person name="Quackenbush J."/>
            <person name="Wahlestedt C."/>
            <person name="Mattick J.S."/>
            <person name="Hume D.A."/>
            <person name="Kai C."/>
            <person name="Sasaki D."/>
            <person name="Tomaru Y."/>
            <person name="Fukuda S."/>
            <person name="Kanamori-Katayama M."/>
            <person name="Suzuki M."/>
            <person name="Aoki J."/>
            <person name="Arakawa T."/>
            <person name="Iida J."/>
            <person name="Imamura K."/>
            <person name="Itoh M."/>
            <person name="Kato T."/>
            <person name="Kawaji H."/>
            <person name="Kawagashira N."/>
            <person name="Kawashima T."/>
            <person name="Kojima M."/>
            <person name="Kondo S."/>
            <person name="Konno H."/>
            <person name="Nakano K."/>
            <person name="Ninomiya N."/>
            <person name="Nishio T."/>
            <person name="Okada M."/>
            <person name="Plessy C."/>
            <person name="Shibata K."/>
            <person name="Shiraki T."/>
            <person name="Suzuki S."/>
            <person name="Tagami M."/>
            <person name="Waki K."/>
            <person name="Watahiki A."/>
            <person name="Okamura-Oho Y."/>
            <person name="Suzuki H."/>
            <person name="Kawai J."/>
            <person name="Hayashizaki Y."/>
        </authorList>
    </citation>
    <scope>NUCLEOTIDE SEQUENCE [LARGE SCALE MRNA] (ISOFORM 2)</scope>
    <source>
        <strain>C57BL/6J</strain>
        <tissue>Embryo</tissue>
        <tissue>Thymus</tissue>
    </source>
</reference>
<reference key="2">
    <citation type="journal article" date="2004" name="Genome Res.">
        <title>The status, quality, and expansion of the NIH full-length cDNA project: the Mammalian Gene Collection (MGC).</title>
        <authorList>
            <consortium name="The MGC Project Team"/>
        </authorList>
    </citation>
    <scope>NUCLEOTIDE SEQUENCE [LARGE SCALE MRNA] (ISOFORMS 1 AND 2)</scope>
    <source>
        <strain>C57BL/6J</strain>
        <strain>FVB/N</strain>
        <tissue>Mammary tumor</tissue>
        <tissue>Retina</tissue>
    </source>
</reference>
<reference key="3">
    <citation type="journal article" date="1997" name="Science">
        <title>Specific inhibition of Stat3 signal transduction by PIAS3.</title>
        <authorList>
            <person name="Chung C.D."/>
            <person name="Liao J."/>
            <person name="Liu B."/>
            <person name="Rao X."/>
            <person name="Jay P."/>
            <person name="Berta P."/>
            <person name="Shuai K."/>
        </authorList>
    </citation>
    <scope>NUCLEOTIDE SEQUENCE [MRNA] OF 10-628 (ISOFORM 3)</scope>
    <scope>INTERACTION WITH STAT3</scope>
    <source>
        <tissue>Thymus</tissue>
    </source>
</reference>
<reference key="4">
    <citation type="submission" date="2013-02" db="EMBL/GenBank/DDBJ databases">
        <authorList>
            <person name="Shuai K."/>
        </authorList>
    </citation>
    <scope>SEQUENCE REVISION</scope>
</reference>
<reference key="5">
    <citation type="journal article" date="2000" name="EMBO J.">
        <title>The zinc finger protein Gfi-1 can enhance STAT3 signaling by interacting with the STAT3 inhibitor PIAS3.</title>
        <authorList>
            <person name="Roedel B."/>
            <person name="Tavassoli K."/>
            <person name="Karsunky H."/>
            <person name="Schmidt T."/>
            <person name="Bachmann M."/>
            <person name="Schaper F."/>
            <person name="Heinrich P."/>
            <person name="Shuai K."/>
            <person name="Elsaesser H.-P."/>
            <person name="Moeroey T."/>
        </authorList>
    </citation>
    <scope>INTERACTION WITH GFI1</scope>
    <scope>FUNCTION</scope>
    <scope>SUBCELLULAR LOCATION</scope>
</reference>
<reference key="6">
    <citation type="journal article" date="2000" name="J. Mol. Neurosci.">
        <title>Cloning and analysis of a murine Pias family member, Pias-gamma, in developing skin and neurons.</title>
        <authorList>
            <person name="Sturm S."/>
            <person name="Koch M."/>
            <person name="White F.A."/>
        </authorList>
    </citation>
    <scope>DEVELOPMENTAL STAGE</scope>
    <scope>TISSUE SPECIFICITY</scope>
    <source>
        <tissue>Brain</tissue>
    </source>
</reference>
<reference key="7">
    <citation type="journal article" date="2000" name="Mol. Endocrinol.">
        <title>ARIP3 (androgen receptor-interacting protein 3) and other PIAS (protein inhibitor of activated STAT) proteins differ in their ability to modulate steroid receptor-dependent transcriptional activation.</title>
        <authorList>
            <person name="Kotaja N."/>
            <person name="Aittomaeki S."/>
            <person name="Silvennoinen O."/>
            <person name="Palvimo J.J."/>
            <person name="Jaenne O.A."/>
        </authorList>
    </citation>
    <scope>INTERACTION WITH AR</scope>
</reference>
<reference key="8">
    <citation type="journal article" date="2001" name="J. Biol. Chem.">
        <title>Requirement for high mobility group protein HMGI-C interaction with STAT3 inhibitor PIAS3 in repression of alpha-subunit of epithelial Na+ channel (alpha-ENaC) transcription by Ras activation in salivary epithelial cells.</title>
        <authorList>
            <person name="Zentner M.D."/>
            <person name="Lin H.H."/>
            <person name="Deng H.-T."/>
            <person name="Kim K.-J."/>
            <person name="Shih H.-M."/>
            <person name="Ann D.K."/>
        </authorList>
    </citation>
    <scope>INTERACTION WITH HMGA2</scope>
</reference>
<reference key="9">
    <citation type="journal article" date="2002" name="FEBS Lett.">
        <title>PIAS3 (protein inhibitor of activated STAT-3) modulates the transcriptional activation mediated by the nuclear receptor coactivator TIF2.</title>
        <authorList>
            <person name="Jimenez-Lara A.M."/>
            <person name="Heine M.J.S."/>
            <person name="Gronemeyer H."/>
        </authorList>
    </citation>
    <scope>INTERACTION WITH NCOA2</scope>
</reference>
<reference key="10">
    <citation type="journal article" date="2002" name="FEBS Lett.">
        <title>PIAS3 induces SUMO-1 modification and transcriptional repression of IRF-1.</title>
        <authorList>
            <person name="Nakagawa K."/>
            <person name="Yokosawa H."/>
        </authorList>
    </citation>
    <scope>INTERACTION WITH IRF1; SUMO1 AND UBE2I</scope>
    <scope>SUMOYLATION</scope>
    <scope>MUTAGENESIS OF CYS-343</scope>
</reference>
<reference key="11">
    <citation type="journal article" date="2002" name="J. Biol. Chem.">
        <title>A new role for the STAT3 inhibitor, PIAS3: a repressor of microphthalmia transcription factor.</title>
        <authorList>
            <person name="Levy C."/>
            <person name="Nechushtan H."/>
            <person name="Razin E."/>
        </authorList>
    </citation>
    <scope>INTERACTION WITH MITF</scope>
    <scope>FUNCTION</scope>
    <scope>SUBCELLULAR LOCATION</scope>
</reference>
<reference key="12">
    <citation type="journal article" date="2002" name="Mol. Cell. Biol.">
        <title>PIAS proteins modulate transcription factors by functioning as SUMO-1 ligases.</title>
        <authorList>
            <person name="Kotaja N."/>
            <person name="Karvonen U."/>
            <person name="Jaenne O.A."/>
            <person name="Palvimo J.J."/>
        </authorList>
    </citation>
    <scope>INTERACTION WITH SUMO1 AND UBE2I</scope>
    <scope>SUBCELLULAR LOCATION</scope>
</reference>
<reference key="13">
    <citation type="journal article" date="2003" name="Blood">
        <title>PIAS proteins promote SUMO-1 conjugation to STAT1.</title>
        <authorList>
            <person name="Ungureanu D."/>
            <person name="Vanhatupa S."/>
            <person name="Kotaja N."/>
            <person name="Yang J."/>
            <person name="Aittomaeki S."/>
            <person name="Jaenne O.A."/>
            <person name="Palvimo J.J."/>
            <person name="Silvennoinen O."/>
        </authorList>
    </citation>
    <scope>STAT1 SUMOYLATION</scope>
</reference>
<reference key="14">
    <citation type="journal article" date="2003" name="FEBS Lett.">
        <title>The 'PINIT' motif, of a newly identified conserved domain of the PIAS protein family, is essential for nuclear retention of PIAS3L.</title>
        <authorList>
            <person name="Duval D."/>
            <person name="Duval G."/>
            <person name="Kedinger C."/>
            <person name="Poch O."/>
            <person name="Boeuf H."/>
        </authorList>
    </citation>
    <scope>FUNCTION OF THE PINIT MOTIF</scope>
    <scope>TISSUE SPECIFICITY</scope>
    <scope>SUBCELLULAR LOCATION</scope>
    <scope>MUTAGENESIS OF 19-LEU--LEU-23; 242-PRO--THR-244 AND 343-CYS--SER-348</scope>
</reference>
<reference key="15">
    <citation type="journal article" date="2008" name="Genes Cells">
        <title>BCL11A is a SUMOylated protein and recruits SUMO-conjugation enzymes in its nuclear body.</title>
        <authorList>
            <person name="Kuwata T."/>
            <person name="Nakamura T."/>
        </authorList>
    </citation>
    <scope>INTERACTION WITH BCL11A</scope>
</reference>
<sequence>MAELGELKHMVMSFRVSELQVLLGFAGRNKSGRKHELLAKALHLLKSSCAPSVQMKIKELYRRRFPRKTLGPSDLSLLSLPPGTSPVGSPGPLAPIPPTLLTPGTLLGPKREVDMHPPLPQPVHPDVTMKPLPFYEVYGELIRPTTLASTSSQRFEEAHFTFALTPQQLQQILTSREVLPGAKCDYTIQVQLRFCLCETSCPQEDYFPPNLFVKVNGKLCPLPGYLPPTKNGAEPKRPSRPINITPLARLSATVPNTIVVNWSSEFGRNYSLSVYLVRQLTAGTLLQKLRAKGIRNPDHSRALIKEKLTADPDSEVATTSLRVSLMCPLGKMRLTVPCRALTCAHLQSFDAALYLQMNEKKPTWTCPVCDKKAPYESLIIDGLFMEILNSCSDCDEIQFMEDGSWCPMKPKKEASEVCPPPGYGLDGLQYSAVQEGIQPESKKRVEVIDLTIESSSDEEDLPPTKKHCPVTSAAIPALPGSKGALTSGHQPSSVLRSPAMGTLGSDFLSSLPLHEYPPAFPLGADIQGLDLFSFLQTESQHYGPSVITSLDEQDTLGHFFQYRGTPSHFLGPLAPTLGSSHRSSTPAPPPGRVSSIVAPGSSLREGHGGPLPSGPSLTGCRSDVISLD</sequence>
<name>PIAS3_MOUSE</name>
<organism>
    <name type="scientific">Mus musculus</name>
    <name type="common">Mouse</name>
    <dbReference type="NCBI Taxonomy" id="10090"/>
    <lineage>
        <taxon>Eukaryota</taxon>
        <taxon>Metazoa</taxon>
        <taxon>Chordata</taxon>
        <taxon>Craniata</taxon>
        <taxon>Vertebrata</taxon>
        <taxon>Euteleostomi</taxon>
        <taxon>Mammalia</taxon>
        <taxon>Eutheria</taxon>
        <taxon>Euarchontoglires</taxon>
        <taxon>Glires</taxon>
        <taxon>Rodentia</taxon>
        <taxon>Myomorpha</taxon>
        <taxon>Muroidea</taxon>
        <taxon>Muridae</taxon>
        <taxon>Murinae</taxon>
        <taxon>Mus</taxon>
        <taxon>Mus</taxon>
    </lineage>
</organism>
<evidence type="ECO:0000250" key="1"/>
<evidence type="ECO:0000250" key="2">
    <source>
        <dbReference type="UniProtKB" id="Q9Y6X2"/>
    </source>
</evidence>
<evidence type="ECO:0000255" key="3">
    <source>
        <dbReference type="PROSITE-ProRule" id="PRU00186"/>
    </source>
</evidence>
<evidence type="ECO:0000255" key="4">
    <source>
        <dbReference type="PROSITE-ProRule" id="PRU00452"/>
    </source>
</evidence>
<evidence type="ECO:0000255" key="5">
    <source>
        <dbReference type="PROSITE-ProRule" id="PRU00799"/>
    </source>
</evidence>
<evidence type="ECO:0000256" key="6">
    <source>
        <dbReference type="SAM" id="MobiDB-lite"/>
    </source>
</evidence>
<evidence type="ECO:0000269" key="7">
    <source>
    </source>
</evidence>
<evidence type="ECO:0000269" key="8">
    <source>
    </source>
</evidence>
<evidence type="ECO:0000269" key="9">
    <source>
    </source>
</evidence>
<evidence type="ECO:0000269" key="10">
    <source>
    </source>
</evidence>
<evidence type="ECO:0000269" key="11">
    <source>
    </source>
</evidence>
<evidence type="ECO:0000269" key="12">
    <source>
    </source>
</evidence>
<evidence type="ECO:0000269" key="13">
    <source>
    </source>
</evidence>
<evidence type="ECO:0000269" key="14">
    <source>
    </source>
</evidence>
<evidence type="ECO:0000269" key="15">
    <source>
    </source>
</evidence>
<evidence type="ECO:0000269" key="16">
    <source>
    </source>
</evidence>
<evidence type="ECO:0000269" key="17">
    <source>
    </source>
</evidence>
<evidence type="ECO:0000303" key="18">
    <source>
    </source>
</evidence>
<evidence type="ECO:0000303" key="19">
    <source>
    </source>
</evidence>
<evidence type="ECO:0000303" key="20">
    <source>
    </source>
</evidence>
<evidence type="ECO:0000305" key="21"/>
<keyword id="KW-0025">Alternative splicing</keyword>
<keyword id="KW-0963">Cytoplasm</keyword>
<keyword id="KW-1017">Isopeptide bond</keyword>
<keyword id="KW-0479">Metal-binding</keyword>
<keyword id="KW-0539">Nucleus</keyword>
<keyword id="KW-1185">Reference proteome</keyword>
<keyword id="KW-0804">Transcription</keyword>
<keyword id="KW-0805">Transcription regulation</keyword>
<keyword id="KW-0808">Transferase</keyword>
<keyword id="KW-0832">Ubl conjugation</keyword>
<keyword id="KW-0833">Ubl conjugation pathway</keyword>
<keyword id="KW-0862">Zinc</keyword>
<keyword id="KW-0863">Zinc-finger</keyword>
<comment type="function">
    <text evidence="2 8 11 15">Functions as an E3-type small ubiquitin-like modifier (SUMO) ligase, stabilizing the interaction between UBE2I and the substrate, and as a SUMO-tethering factor. Plays a crucial role as a transcriptional coregulation in various cellular pathways, including the STAT pathway and the steroid hormone signaling pathway. Repressor of STAT3 signaling via inhibiting STAT3 DNA-binding and suppressing cell growth. Repressor of MITF transcriptional activity. Enhances the sumoylation of MTA1 and may participate in its paralog-selective sumoylation. Sumoylates CCAR2 which promotes its interaction with SIRT1 (By similarity). Diminishes the sumoylation of ZFHX3 by preventing the colocalization of ZFHX3 with SUMO1 in the nucleus (By similarity).</text>
</comment>
<comment type="pathway">
    <text>Protein modification; protein sumoylation.</text>
</comment>
<comment type="subunit">
    <text evidence="2 8 9 10 11 12 13 14 16 17">Monomer. Interacts with PLAG1 and ZFHX3. Interacts with STAT5A; the interaction occurs on stimulation by PRL (By similarity). Binds SUMO1 and UBE2I. Interacts with AR, BCL11A, HMGA2, IRF1 and NCOA2. Interacts with MITF; the interaction inhibits the transcriptional activity of MITF. Interacts with STAT3; the interaction occurs on stimulation by IL6, CNTF or OSM and inhibits the DNA binding activity of STAT3. Interacts with GFI1; the interaction relieves the inhibitory effect of PIAS3 on STAT3-mediated transcriptional activity. Interacts with MTA1. Interacts with CCAR2 (via N-terminus) (By similarity). Interacts with TRIM8 (By similarity). Interacts with PRDM1 (By similarity).</text>
</comment>
<comment type="interaction">
    <interactant intactId="EBI-927969">
        <id>O54714</id>
    </interactant>
    <interactant intactId="EBI-3954754">
        <id>P70338</id>
        <label>Gfi1</label>
    </interactant>
    <organismsDiffer>false</organismsDiffer>
    <experiments>6</experiments>
</comment>
<comment type="subcellular location">
    <subcellularLocation>
        <location evidence="8 11">Cytoplasm</location>
    </subcellularLocation>
    <subcellularLocation>
        <location evidence="8 11 15">Nucleus</location>
    </subcellularLocation>
    <subcellularLocation>
        <location evidence="12">Nucleus speckle</location>
    </subcellularLocation>
    <text evidence="8 11 12">Colocalizes with MITF in the nucleus (PubMed:11709556). Colocalizes with GFI1 in nuclear dots (PubMed:11060035). Colocalizes with SUMO1 in nuclear granules (PubMed:12077349).</text>
</comment>
<comment type="alternative products">
    <event type="alternative splicing"/>
    <isoform>
        <id>O54714-1</id>
        <name>1</name>
        <sequence type="displayed"/>
    </isoform>
    <isoform>
        <id>O54714-2</id>
        <name>2</name>
        <sequence type="described" ref="VSP_012203"/>
    </isoform>
    <isoform>
        <id>O54714-3</id>
        <name>3</name>
        <sequence type="described" ref="VSP_012204"/>
    </isoform>
</comment>
<comment type="tissue specificity">
    <text evidence="7 15">Expressed in kidney, heart, spleen, brain and cerebellum; weak expression, if any, in liver and lung.</text>
</comment>
<comment type="developmental stage">
    <text evidence="7">Expressed as early as 7.6 dpc. Expression remains high through 15.5 dpc.</text>
</comment>
<comment type="domain">
    <text>The LXXLL motif is a transcriptional coregulator signature.</text>
</comment>
<comment type="PTM">
    <text evidence="14">Sumoylated.</text>
</comment>
<comment type="similarity">
    <text evidence="21">Belongs to the PIAS family.</text>
</comment>